<accession>Q7W9A5</accession>
<reference key="1">
    <citation type="journal article" date="2003" name="Nat. Genet.">
        <title>Comparative analysis of the genome sequences of Bordetella pertussis, Bordetella parapertussis and Bordetella bronchiseptica.</title>
        <authorList>
            <person name="Parkhill J."/>
            <person name="Sebaihia M."/>
            <person name="Preston A."/>
            <person name="Murphy L.D."/>
            <person name="Thomson N.R."/>
            <person name="Harris D.E."/>
            <person name="Holden M.T.G."/>
            <person name="Churcher C.M."/>
            <person name="Bentley S.D."/>
            <person name="Mungall K.L."/>
            <person name="Cerdeno-Tarraga A.-M."/>
            <person name="Temple L."/>
            <person name="James K.D."/>
            <person name="Harris B."/>
            <person name="Quail M.A."/>
            <person name="Achtman M."/>
            <person name="Atkin R."/>
            <person name="Baker S."/>
            <person name="Basham D."/>
            <person name="Bason N."/>
            <person name="Cherevach I."/>
            <person name="Chillingworth T."/>
            <person name="Collins M."/>
            <person name="Cronin A."/>
            <person name="Davis P."/>
            <person name="Doggett J."/>
            <person name="Feltwell T."/>
            <person name="Goble A."/>
            <person name="Hamlin N."/>
            <person name="Hauser H."/>
            <person name="Holroyd S."/>
            <person name="Jagels K."/>
            <person name="Leather S."/>
            <person name="Moule S."/>
            <person name="Norberczak H."/>
            <person name="O'Neil S."/>
            <person name="Ormond D."/>
            <person name="Price C."/>
            <person name="Rabbinowitsch E."/>
            <person name="Rutter S."/>
            <person name="Sanders M."/>
            <person name="Saunders D."/>
            <person name="Seeger K."/>
            <person name="Sharp S."/>
            <person name="Simmonds M."/>
            <person name="Skelton J."/>
            <person name="Squares R."/>
            <person name="Squares S."/>
            <person name="Stevens K."/>
            <person name="Unwin L."/>
            <person name="Whitehead S."/>
            <person name="Barrell B.G."/>
            <person name="Maskell D.J."/>
        </authorList>
    </citation>
    <scope>NUCLEOTIDE SEQUENCE [LARGE SCALE GENOMIC DNA]</scope>
    <source>
        <strain>12822 / ATCC BAA-587 / NCTC 13253</strain>
    </source>
</reference>
<organism>
    <name type="scientific">Bordetella parapertussis (strain 12822 / ATCC BAA-587 / NCTC 13253)</name>
    <dbReference type="NCBI Taxonomy" id="257311"/>
    <lineage>
        <taxon>Bacteria</taxon>
        <taxon>Pseudomonadati</taxon>
        <taxon>Pseudomonadota</taxon>
        <taxon>Betaproteobacteria</taxon>
        <taxon>Burkholderiales</taxon>
        <taxon>Alcaligenaceae</taxon>
        <taxon>Bordetella</taxon>
    </lineage>
</organism>
<name>IF2_BORPA</name>
<keyword id="KW-0963">Cytoplasm</keyword>
<keyword id="KW-0342">GTP-binding</keyword>
<keyword id="KW-0396">Initiation factor</keyword>
<keyword id="KW-0547">Nucleotide-binding</keyword>
<keyword id="KW-0648">Protein biosynthesis</keyword>
<protein>
    <recommendedName>
        <fullName evidence="2">Translation initiation factor IF-2</fullName>
    </recommendedName>
</protein>
<feature type="chain" id="PRO_0000137175" description="Translation initiation factor IF-2">
    <location>
        <begin position="1"/>
        <end position="969"/>
    </location>
</feature>
<feature type="domain" description="tr-type G">
    <location>
        <begin position="470"/>
        <end position="637"/>
    </location>
</feature>
<feature type="region of interest" description="Disordered" evidence="3">
    <location>
        <begin position="96"/>
        <end position="377"/>
    </location>
</feature>
<feature type="region of interest" description="G1" evidence="1">
    <location>
        <begin position="479"/>
        <end position="486"/>
    </location>
</feature>
<feature type="region of interest" description="G2" evidence="1">
    <location>
        <begin position="504"/>
        <end position="508"/>
    </location>
</feature>
<feature type="region of interest" description="G3" evidence="1">
    <location>
        <begin position="525"/>
        <end position="528"/>
    </location>
</feature>
<feature type="region of interest" description="G4" evidence="1">
    <location>
        <begin position="579"/>
        <end position="582"/>
    </location>
</feature>
<feature type="region of interest" description="G5" evidence="1">
    <location>
        <begin position="615"/>
        <end position="617"/>
    </location>
</feature>
<feature type="compositionally biased region" description="Low complexity" evidence="3">
    <location>
        <begin position="105"/>
        <end position="157"/>
    </location>
</feature>
<feature type="compositionally biased region" description="Low complexity" evidence="3">
    <location>
        <begin position="167"/>
        <end position="181"/>
    </location>
</feature>
<feature type="compositionally biased region" description="Low complexity" evidence="3">
    <location>
        <begin position="216"/>
        <end position="252"/>
    </location>
</feature>
<feature type="compositionally biased region" description="Basic and acidic residues" evidence="3">
    <location>
        <begin position="253"/>
        <end position="264"/>
    </location>
</feature>
<feature type="compositionally biased region" description="Gly residues" evidence="3">
    <location>
        <begin position="357"/>
        <end position="366"/>
    </location>
</feature>
<feature type="binding site" evidence="2">
    <location>
        <begin position="479"/>
        <end position="486"/>
    </location>
    <ligand>
        <name>GTP</name>
        <dbReference type="ChEBI" id="CHEBI:37565"/>
    </ligand>
</feature>
<feature type="binding site" evidence="2">
    <location>
        <begin position="525"/>
        <end position="529"/>
    </location>
    <ligand>
        <name>GTP</name>
        <dbReference type="ChEBI" id="CHEBI:37565"/>
    </ligand>
</feature>
<feature type="binding site" evidence="2">
    <location>
        <begin position="579"/>
        <end position="582"/>
    </location>
    <ligand>
        <name>GTP</name>
        <dbReference type="ChEBI" id="CHEBI:37565"/>
    </ligand>
</feature>
<comment type="function">
    <text evidence="2">One of the essential components for the initiation of protein synthesis. Protects formylmethionyl-tRNA from spontaneous hydrolysis and promotes its binding to the 30S ribosomal subunits. Also involved in the hydrolysis of GTP during the formation of the 70S ribosomal complex.</text>
</comment>
<comment type="subcellular location">
    <subcellularLocation>
        <location evidence="2">Cytoplasm</location>
    </subcellularLocation>
</comment>
<comment type="similarity">
    <text evidence="2">Belongs to the TRAFAC class translation factor GTPase superfamily. Classic translation factor GTPase family. IF-2 subfamily.</text>
</comment>
<sequence>MSSNTVAQFATELKMPANVLLEQLRAAGVDLKSVDDAVTDSDKAKLLESLRRAHGATEGKKITLTRRQTSEIRQADATGRSRTIQVEVRKKRVFVKRDPAEPVRAEPAVETAAKPVEPPVAEAPAEPVAAPAAEPQPEQPAQAEAQPEPTPAAQAEPEPQPEPQPEAAPAQAVAEPVEPAKNVSVTETEAEQARPEPVVHAQTELTSQTPAPVAQPSAPAESPKSAKAEPAAAPKTTAKPGEIRRAAAPAAPDRAREEARRAAEAEAAALREMLSRPRKVLRAPEPEPQAGALSGTLHKPAGKPATTAAPKKDAKPGAPGAKKTIKTAEVSSTWSDDSARKKPADNKPAVTTRDGWRAGGKGGRGGRNSRNQHQDRRHEQVQQEFIAREIHVPETISVADLAHKMSVKAAEVIKQLMKLGQMVTINQVLDQETAMIVVQEFGHTAIAAKLDDPEAFLDETAAVTEAEAEPRAPVVTVMGHVDHGKTSLLDYIRRAKVASGEAGGITQHIGAYHVETGRGVVTFLDTPGHEAFTAMRARGAKATDIVILVVAADDGVMPQTREAIHHAKAGGVPLVVAVNKIDKPEANPERVKQELVAEEVVPEEYGGDVPFVPVSAKTGAGIDDLLENVLLQAEILELKAPIEVPAKGLVIEARLDKGRGPVATILVQSGTLKRGDVVLAGASFGRVRAMLDENGKQIQTAGPSIPVEIQGLTEVPAAGDELMVLSDERKAREIALFRQGKFRDVKLARQQAAKLESMFDNLGEGTQTLALIVKTDVQGSQEALVSSLTKLSTDEVRVQVVHAAVGGISESDVNLAIASNAVVIGFNVRAEQSAKKLAETNGIDLRYYNIIYDAVDEVKAAMSGMLAPEKREEVIGLVEVREVYTISRIGTVAGCMVLDGVVRRDSQVRLLRNNVVQWTGHLDSLRRFKDDVKEVKSGFDCGLTLRGNNDLQLGDQLEVFEIKEIARTL</sequence>
<proteinExistence type="inferred from homology"/>
<gene>
    <name evidence="2" type="primary">infB</name>
    <name type="ordered locus">BPP1862</name>
</gene>
<dbReference type="EMBL" id="BX640428">
    <property type="protein sequence ID" value="CAE37163.1"/>
    <property type="molecule type" value="Genomic_DNA"/>
</dbReference>
<dbReference type="RefSeq" id="WP_010928245.1">
    <property type="nucleotide sequence ID" value="NC_002928.3"/>
</dbReference>
<dbReference type="SMR" id="Q7W9A5"/>
<dbReference type="GeneID" id="93203631"/>
<dbReference type="KEGG" id="bpa:BPP1862"/>
<dbReference type="HOGENOM" id="CLU_006301_6_0_4"/>
<dbReference type="Proteomes" id="UP000001421">
    <property type="component" value="Chromosome"/>
</dbReference>
<dbReference type="GO" id="GO:0005829">
    <property type="term" value="C:cytosol"/>
    <property type="evidence" value="ECO:0007669"/>
    <property type="project" value="TreeGrafter"/>
</dbReference>
<dbReference type="GO" id="GO:0005525">
    <property type="term" value="F:GTP binding"/>
    <property type="evidence" value="ECO:0007669"/>
    <property type="project" value="UniProtKB-KW"/>
</dbReference>
<dbReference type="GO" id="GO:0003924">
    <property type="term" value="F:GTPase activity"/>
    <property type="evidence" value="ECO:0007669"/>
    <property type="project" value="UniProtKB-UniRule"/>
</dbReference>
<dbReference type="GO" id="GO:0097216">
    <property type="term" value="F:guanosine tetraphosphate binding"/>
    <property type="evidence" value="ECO:0007669"/>
    <property type="project" value="UniProtKB-ARBA"/>
</dbReference>
<dbReference type="GO" id="GO:0003743">
    <property type="term" value="F:translation initiation factor activity"/>
    <property type="evidence" value="ECO:0007669"/>
    <property type="project" value="UniProtKB-UniRule"/>
</dbReference>
<dbReference type="CDD" id="cd01887">
    <property type="entry name" value="IF2_eIF5B"/>
    <property type="match status" value="1"/>
</dbReference>
<dbReference type="CDD" id="cd03702">
    <property type="entry name" value="IF2_mtIF2_II"/>
    <property type="match status" value="1"/>
</dbReference>
<dbReference type="CDD" id="cd03692">
    <property type="entry name" value="mtIF2_IVc"/>
    <property type="match status" value="1"/>
</dbReference>
<dbReference type="FunFam" id="2.40.30.10:FF:000007">
    <property type="entry name" value="Translation initiation factor IF-2"/>
    <property type="match status" value="1"/>
</dbReference>
<dbReference type="FunFam" id="2.40.30.10:FF:000008">
    <property type="entry name" value="Translation initiation factor IF-2"/>
    <property type="match status" value="1"/>
</dbReference>
<dbReference type="FunFam" id="3.40.50.10050:FF:000001">
    <property type="entry name" value="Translation initiation factor IF-2"/>
    <property type="match status" value="1"/>
</dbReference>
<dbReference type="FunFam" id="3.40.50.300:FF:000019">
    <property type="entry name" value="Translation initiation factor IF-2"/>
    <property type="match status" value="1"/>
</dbReference>
<dbReference type="Gene3D" id="3.40.50.300">
    <property type="entry name" value="P-loop containing nucleotide triphosphate hydrolases"/>
    <property type="match status" value="1"/>
</dbReference>
<dbReference type="Gene3D" id="3.30.56.50">
    <property type="entry name" value="Putative DNA-binding domain, N-terminal subdomain of bacterial translation initiation factor IF2"/>
    <property type="match status" value="1"/>
</dbReference>
<dbReference type="Gene3D" id="2.40.30.10">
    <property type="entry name" value="Translation factors"/>
    <property type="match status" value="2"/>
</dbReference>
<dbReference type="Gene3D" id="3.40.50.10050">
    <property type="entry name" value="Translation initiation factor IF- 2, domain 3"/>
    <property type="match status" value="1"/>
</dbReference>
<dbReference type="HAMAP" id="MF_00100_B">
    <property type="entry name" value="IF_2_B"/>
    <property type="match status" value="1"/>
</dbReference>
<dbReference type="InterPro" id="IPR009061">
    <property type="entry name" value="DNA-bd_dom_put_sf"/>
</dbReference>
<dbReference type="InterPro" id="IPR053905">
    <property type="entry name" value="EF-G-like_DII"/>
</dbReference>
<dbReference type="InterPro" id="IPR004161">
    <property type="entry name" value="EFTu-like_2"/>
</dbReference>
<dbReference type="InterPro" id="IPR013575">
    <property type="entry name" value="IF2_assoc_dom_bac"/>
</dbReference>
<dbReference type="InterPro" id="IPR044145">
    <property type="entry name" value="IF2_II"/>
</dbReference>
<dbReference type="InterPro" id="IPR006847">
    <property type="entry name" value="IF2_N"/>
</dbReference>
<dbReference type="InterPro" id="IPR027417">
    <property type="entry name" value="P-loop_NTPase"/>
</dbReference>
<dbReference type="InterPro" id="IPR005225">
    <property type="entry name" value="Small_GTP-bd"/>
</dbReference>
<dbReference type="InterPro" id="IPR000795">
    <property type="entry name" value="T_Tr_GTP-bd_dom"/>
</dbReference>
<dbReference type="InterPro" id="IPR000178">
    <property type="entry name" value="TF_IF2_bacterial-like"/>
</dbReference>
<dbReference type="InterPro" id="IPR015760">
    <property type="entry name" value="TIF_IF2"/>
</dbReference>
<dbReference type="InterPro" id="IPR023115">
    <property type="entry name" value="TIF_IF2_dom3"/>
</dbReference>
<dbReference type="InterPro" id="IPR036925">
    <property type="entry name" value="TIF_IF2_dom3_sf"/>
</dbReference>
<dbReference type="InterPro" id="IPR009000">
    <property type="entry name" value="Transl_B-barrel_sf"/>
</dbReference>
<dbReference type="NCBIfam" id="TIGR00487">
    <property type="entry name" value="IF-2"/>
    <property type="match status" value="1"/>
</dbReference>
<dbReference type="NCBIfam" id="TIGR00231">
    <property type="entry name" value="small_GTP"/>
    <property type="match status" value="1"/>
</dbReference>
<dbReference type="PANTHER" id="PTHR43381:SF5">
    <property type="entry name" value="TR-TYPE G DOMAIN-CONTAINING PROTEIN"/>
    <property type="match status" value="1"/>
</dbReference>
<dbReference type="PANTHER" id="PTHR43381">
    <property type="entry name" value="TRANSLATION INITIATION FACTOR IF-2-RELATED"/>
    <property type="match status" value="1"/>
</dbReference>
<dbReference type="Pfam" id="PF22042">
    <property type="entry name" value="EF-G_D2"/>
    <property type="match status" value="1"/>
</dbReference>
<dbReference type="Pfam" id="PF00009">
    <property type="entry name" value="GTP_EFTU"/>
    <property type="match status" value="1"/>
</dbReference>
<dbReference type="Pfam" id="PF03144">
    <property type="entry name" value="GTP_EFTU_D2"/>
    <property type="match status" value="1"/>
</dbReference>
<dbReference type="Pfam" id="PF11987">
    <property type="entry name" value="IF-2"/>
    <property type="match status" value="1"/>
</dbReference>
<dbReference type="Pfam" id="PF08364">
    <property type="entry name" value="IF2_assoc"/>
    <property type="match status" value="1"/>
</dbReference>
<dbReference type="Pfam" id="PF04760">
    <property type="entry name" value="IF2_N"/>
    <property type="match status" value="2"/>
</dbReference>
<dbReference type="SUPFAM" id="SSF52156">
    <property type="entry name" value="Initiation factor IF2/eIF5b, domain 3"/>
    <property type="match status" value="1"/>
</dbReference>
<dbReference type="SUPFAM" id="SSF52540">
    <property type="entry name" value="P-loop containing nucleoside triphosphate hydrolases"/>
    <property type="match status" value="1"/>
</dbReference>
<dbReference type="SUPFAM" id="SSF46955">
    <property type="entry name" value="Putative DNA-binding domain"/>
    <property type="match status" value="1"/>
</dbReference>
<dbReference type="SUPFAM" id="SSF50447">
    <property type="entry name" value="Translation proteins"/>
    <property type="match status" value="2"/>
</dbReference>
<dbReference type="PROSITE" id="PS51722">
    <property type="entry name" value="G_TR_2"/>
    <property type="match status" value="1"/>
</dbReference>
<dbReference type="PROSITE" id="PS01176">
    <property type="entry name" value="IF2"/>
    <property type="match status" value="1"/>
</dbReference>
<evidence type="ECO:0000250" key="1"/>
<evidence type="ECO:0000255" key="2">
    <source>
        <dbReference type="HAMAP-Rule" id="MF_00100"/>
    </source>
</evidence>
<evidence type="ECO:0000256" key="3">
    <source>
        <dbReference type="SAM" id="MobiDB-lite"/>
    </source>
</evidence>